<keyword id="KW-0249">Electron transport</keyword>
<keyword id="KW-0349">Heme</keyword>
<keyword id="KW-0408">Iron</keyword>
<keyword id="KW-0472">Membrane</keyword>
<keyword id="KW-0479">Metal-binding</keyword>
<keyword id="KW-0496">Mitochondrion</keyword>
<keyword id="KW-0999">Mitochondrion inner membrane</keyword>
<keyword id="KW-0679">Respiratory chain</keyword>
<keyword id="KW-0812">Transmembrane</keyword>
<keyword id="KW-1133">Transmembrane helix</keyword>
<keyword id="KW-0813">Transport</keyword>
<keyword id="KW-0830">Ubiquinone</keyword>
<comment type="function">
    <text evidence="2">Component of the ubiquinol-cytochrome c reductase complex (complex III or cytochrome b-c1 complex) that is part of the mitochondrial respiratory chain. The b-c1 complex mediates electron transfer from ubiquinol to cytochrome c. Contributes to the generation of a proton gradient across the mitochondrial membrane that is then used for ATP synthesis.</text>
</comment>
<comment type="cofactor">
    <cofactor evidence="2">
        <name>heme b</name>
        <dbReference type="ChEBI" id="CHEBI:60344"/>
    </cofactor>
    <text evidence="2">Binds 2 heme b groups non-covalently.</text>
</comment>
<comment type="subunit">
    <text evidence="2">The cytochrome bc1 complex contains 11 subunits: 3 respiratory subunits (MT-CYB, CYC1 and UQCRFS1), 2 core proteins (UQCRC1 and UQCRC2) and 6 low-molecular weight proteins (UQCRH/QCR6, UQCRB/QCR7, UQCRQ/QCR8, UQCR10/QCR9, UQCR11/QCR10 and a cleavage product of UQCRFS1). This cytochrome bc1 complex then forms a dimer.</text>
</comment>
<comment type="subcellular location">
    <subcellularLocation>
        <location evidence="2">Mitochondrion inner membrane</location>
        <topology evidence="2">Multi-pass membrane protein</topology>
    </subcellularLocation>
</comment>
<comment type="miscellaneous">
    <text evidence="1">Heme 1 (or BL or b562) is low-potential and absorbs at about 562 nm, and heme 2 (or BH or b566) is high-potential and absorbs at about 566 nm.</text>
</comment>
<comment type="similarity">
    <text evidence="3 4">Belongs to the cytochrome b family.</text>
</comment>
<comment type="caution">
    <text evidence="2">The full-length protein contains only eight transmembrane helices, not nine as predicted by bioinformatics tools.</text>
</comment>
<sequence length="379" mass="42872">MTNIRKTHPLIKIVNHSFIDLPTPSNISAWWNFGSLLGLCLIIQILTGLFLAMHYTSDTMTAFSSVTHICRDVNYGWLIRYIHANGASMFFICLYLHVGRGLYYGSYTYFETWNIGVILLFTIMATAFMGYVLPWGQMSFWGATVITNLLSAIPYIGTNLVEWIWGGFSVDKATLTRFFAFHFILPFIIAALVMVHLLFLHETGSNNPSGLVSDSDKVPFHPYFTIKDILGALLLTLTLMLLVLFSPDLLGDPDNYTPANPLNTPPHIKPEWYFLFAYAILQSIPNKLGGVLALVFSILILMLFPILHMSKQRGMMFRPLSQCLFWILAADLFTLTWIGGQPVEHPFIVIGQTASILYFTIILIILPLASMLENKLLKW</sequence>
<geneLocation type="mitochondrion"/>
<feature type="chain" id="PRO_0000255119" description="Cytochrome b">
    <location>
        <begin position="1"/>
        <end position="379"/>
    </location>
</feature>
<feature type="transmembrane region" description="Helical" evidence="2">
    <location>
        <begin position="33"/>
        <end position="53"/>
    </location>
</feature>
<feature type="transmembrane region" description="Helical" evidence="2">
    <location>
        <begin position="77"/>
        <end position="98"/>
    </location>
</feature>
<feature type="transmembrane region" description="Helical" evidence="2">
    <location>
        <begin position="113"/>
        <end position="133"/>
    </location>
</feature>
<feature type="transmembrane region" description="Helical" evidence="2">
    <location>
        <begin position="178"/>
        <end position="198"/>
    </location>
</feature>
<feature type="transmembrane region" description="Helical" evidence="2">
    <location>
        <begin position="226"/>
        <end position="246"/>
    </location>
</feature>
<feature type="transmembrane region" description="Helical" evidence="2">
    <location>
        <begin position="288"/>
        <end position="308"/>
    </location>
</feature>
<feature type="transmembrane region" description="Helical" evidence="2">
    <location>
        <begin position="320"/>
        <end position="340"/>
    </location>
</feature>
<feature type="transmembrane region" description="Helical" evidence="2">
    <location>
        <begin position="347"/>
        <end position="367"/>
    </location>
</feature>
<feature type="binding site" description="axial binding residue" evidence="2">
    <location>
        <position position="83"/>
    </location>
    <ligand>
        <name>heme b</name>
        <dbReference type="ChEBI" id="CHEBI:60344"/>
        <label>b562</label>
    </ligand>
    <ligandPart>
        <name>Fe</name>
        <dbReference type="ChEBI" id="CHEBI:18248"/>
    </ligandPart>
</feature>
<feature type="binding site" description="axial binding residue" evidence="2">
    <location>
        <position position="97"/>
    </location>
    <ligand>
        <name>heme b</name>
        <dbReference type="ChEBI" id="CHEBI:60344"/>
        <label>b566</label>
    </ligand>
    <ligandPart>
        <name>Fe</name>
        <dbReference type="ChEBI" id="CHEBI:18248"/>
    </ligandPart>
</feature>
<feature type="binding site" description="axial binding residue" evidence="2">
    <location>
        <position position="182"/>
    </location>
    <ligand>
        <name>heme b</name>
        <dbReference type="ChEBI" id="CHEBI:60344"/>
        <label>b562</label>
    </ligand>
    <ligandPart>
        <name>Fe</name>
        <dbReference type="ChEBI" id="CHEBI:18248"/>
    </ligandPart>
</feature>
<feature type="binding site" description="axial binding residue" evidence="2">
    <location>
        <position position="196"/>
    </location>
    <ligand>
        <name>heme b</name>
        <dbReference type="ChEBI" id="CHEBI:60344"/>
        <label>b566</label>
    </ligand>
    <ligandPart>
        <name>Fe</name>
        <dbReference type="ChEBI" id="CHEBI:18248"/>
    </ligandPart>
</feature>
<feature type="binding site" evidence="2">
    <location>
        <position position="201"/>
    </location>
    <ligand>
        <name>a ubiquinone</name>
        <dbReference type="ChEBI" id="CHEBI:16389"/>
    </ligand>
</feature>
<accession>Q288H2</accession>
<reference key="1">
    <citation type="journal article" date="2006" name="Mol. Phylogenet. Evol.">
        <title>Phylogeny and biogeography of the Petaurista philippensis complex (Rodentia: Sciuridae), inter- and intraspecific relationships inferred from molecular and morphometric analysis.</title>
        <authorList>
            <person name="Yu F."/>
            <person name="Yu F."/>
            <person name="Pang J."/>
            <person name="Kilpatrick C.W."/>
            <person name="McGuire P.M."/>
            <person name="Wang Y."/>
            <person name="Lu S."/>
            <person name="Woods C.A."/>
        </authorList>
    </citation>
    <scope>NUCLEOTIDE SEQUENCE [GENOMIC DNA]</scope>
    <source>
        <tissue>Skin</tissue>
    </source>
</reference>
<gene>
    <name type="primary">MT-CYB</name>
    <name type="synonym">COB</name>
    <name type="synonym">CYTB</name>
    <name type="synonym">MTCYB</name>
</gene>
<dbReference type="EMBL" id="DQ072110">
    <property type="protein sequence ID" value="AAZ23217.1"/>
    <property type="molecule type" value="Genomic_DNA"/>
</dbReference>
<dbReference type="SMR" id="Q288H2"/>
<dbReference type="GO" id="GO:0005743">
    <property type="term" value="C:mitochondrial inner membrane"/>
    <property type="evidence" value="ECO:0007669"/>
    <property type="project" value="UniProtKB-SubCell"/>
</dbReference>
<dbReference type="GO" id="GO:0045275">
    <property type="term" value="C:respiratory chain complex III"/>
    <property type="evidence" value="ECO:0007669"/>
    <property type="project" value="InterPro"/>
</dbReference>
<dbReference type="GO" id="GO:0046872">
    <property type="term" value="F:metal ion binding"/>
    <property type="evidence" value="ECO:0007669"/>
    <property type="project" value="UniProtKB-KW"/>
</dbReference>
<dbReference type="GO" id="GO:0008121">
    <property type="term" value="F:ubiquinol-cytochrome-c reductase activity"/>
    <property type="evidence" value="ECO:0007669"/>
    <property type="project" value="InterPro"/>
</dbReference>
<dbReference type="GO" id="GO:0006122">
    <property type="term" value="P:mitochondrial electron transport, ubiquinol to cytochrome c"/>
    <property type="evidence" value="ECO:0007669"/>
    <property type="project" value="TreeGrafter"/>
</dbReference>
<dbReference type="CDD" id="cd00290">
    <property type="entry name" value="cytochrome_b_C"/>
    <property type="match status" value="1"/>
</dbReference>
<dbReference type="CDD" id="cd00284">
    <property type="entry name" value="Cytochrome_b_N"/>
    <property type="match status" value="1"/>
</dbReference>
<dbReference type="FunFam" id="1.20.810.10:FF:000002">
    <property type="entry name" value="Cytochrome b"/>
    <property type="match status" value="1"/>
</dbReference>
<dbReference type="Gene3D" id="1.20.810.10">
    <property type="entry name" value="Cytochrome Bc1 Complex, Chain C"/>
    <property type="match status" value="1"/>
</dbReference>
<dbReference type="InterPro" id="IPR005798">
    <property type="entry name" value="Cyt_b/b6_C"/>
</dbReference>
<dbReference type="InterPro" id="IPR036150">
    <property type="entry name" value="Cyt_b/b6_C_sf"/>
</dbReference>
<dbReference type="InterPro" id="IPR005797">
    <property type="entry name" value="Cyt_b/b6_N"/>
</dbReference>
<dbReference type="InterPro" id="IPR027387">
    <property type="entry name" value="Cytb/b6-like_sf"/>
</dbReference>
<dbReference type="InterPro" id="IPR030689">
    <property type="entry name" value="Cytochrome_b"/>
</dbReference>
<dbReference type="InterPro" id="IPR048260">
    <property type="entry name" value="Cytochrome_b_C_euk/bac"/>
</dbReference>
<dbReference type="InterPro" id="IPR048259">
    <property type="entry name" value="Cytochrome_b_N_euk/bac"/>
</dbReference>
<dbReference type="InterPro" id="IPR016174">
    <property type="entry name" value="Di-haem_cyt_TM"/>
</dbReference>
<dbReference type="PANTHER" id="PTHR19271">
    <property type="entry name" value="CYTOCHROME B"/>
    <property type="match status" value="1"/>
</dbReference>
<dbReference type="PANTHER" id="PTHR19271:SF16">
    <property type="entry name" value="CYTOCHROME B"/>
    <property type="match status" value="1"/>
</dbReference>
<dbReference type="Pfam" id="PF00032">
    <property type="entry name" value="Cytochrom_B_C"/>
    <property type="match status" value="1"/>
</dbReference>
<dbReference type="Pfam" id="PF00033">
    <property type="entry name" value="Cytochrome_B"/>
    <property type="match status" value="1"/>
</dbReference>
<dbReference type="PIRSF" id="PIRSF038885">
    <property type="entry name" value="COB"/>
    <property type="match status" value="1"/>
</dbReference>
<dbReference type="SUPFAM" id="SSF81648">
    <property type="entry name" value="a domain/subunit of cytochrome bc1 complex (Ubiquinol-cytochrome c reductase)"/>
    <property type="match status" value="1"/>
</dbReference>
<dbReference type="SUPFAM" id="SSF81342">
    <property type="entry name" value="Transmembrane di-heme cytochromes"/>
    <property type="match status" value="1"/>
</dbReference>
<dbReference type="PROSITE" id="PS51003">
    <property type="entry name" value="CYTB_CTER"/>
    <property type="match status" value="1"/>
</dbReference>
<dbReference type="PROSITE" id="PS51002">
    <property type="entry name" value="CYTB_NTER"/>
    <property type="match status" value="1"/>
</dbReference>
<organism>
    <name type="scientific">Petaurista yunanensis</name>
    <name type="common">Yunnan giant flying squirrel</name>
    <dbReference type="NCBI Taxonomy" id="254710"/>
    <lineage>
        <taxon>Eukaryota</taxon>
        <taxon>Metazoa</taxon>
        <taxon>Chordata</taxon>
        <taxon>Craniata</taxon>
        <taxon>Vertebrata</taxon>
        <taxon>Euteleostomi</taxon>
        <taxon>Mammalia</taxon>
        <taxon>Eutheria</taxon>
        <taxon>Euarchontoglires</taxon>
        <taxon>Glires</taxon>
        <taxon>Rodentia</taxon>
        <taxon>Sciuromorpha</taxon>
        <taxon>Sciuridae</taxon>
        <taxon>Sciurinae</taxon>
        <taxon>Pteromyini</taxon>
        <taxon>Petaurista</taxon>
    </lineage>
</organism>
<proteinExistence type="inferred from homology"/>
<name>CYB_PETYU</name>
<evidence type="ECO:0000250" key="1"/>
<evidence type="ECO:0000250" key="2">
    <source>
        <dbReference type="UniProtKB" id="P00157"/>
    </source>
</evidence>
<evidence type="ECO:0000255" key="3">
    <source>
        <dbReference type="PROSITE-ProRule" id="PRU00967"/>
    </source>
</evidence>
<evidence type="ECO:0000255" key="4">
    <source>
        <dbReference type="PROSITE-ProRule" id="PRU00968"/>
    </source>
</evidence>
<protein>
    <recommendedName>
        <fullName>Cytochrome b</fullName>
    </recommendedName>
    <alternativeName>
        <fullName>Complex III subunit 3</fullName>
    </alternativeName>
    <alternativeName>
        <fullName>Complex III subunit III</fullName>
    </alternativeName>
    <alternativeName>
        <fullName>Cytochrome b-c1 complex subunit 3</fullName>
    </alternativeName>
    <alternativeName>
        <fullName>Ubiquinol-cytochrome-c reductase complex cytochrome b subunit</fullName>
    </alternativeName>
</protein>